<name>SCTN_PSESH</name>
<evidence type="ECO:0000250" key="1">
    <source>
        <dbReference type="UniProtKB" id="P0A1B9"/>
    </source>
</evidence>
<evidence type="ECO:0000250" key="2">
    <source>
        <dbReference type="UniProtKB" id="P0A1C1"/>
    </source>
</evidence>
<evidence type="ECO:0000250" key="3">
    <source>
        <dbReference type="UniProtKB" id="Q52371"/>
    </source>
</evidence>
<evidence type="ECO:0000269" key="4">
    <source>
    </source>
</evidence>
<evidence type="ECO:0000269" key="5">
    <source>
    </source>
</evidence>
<evidence type="ECO:0000303" key="6">
    <source>
    </source>
</evidence>
<evidence type="ECO:0000305" key="7"/>
<evidence type="ECO:0000305" key="8">
    <source>
    </source>
</evidence>
<protein>
    <recommendedName>
        <fullName evidence="7">Type 3 secretion system ATPase</fullName>
        <shortName evidence="7">T3SS ATPase</shortName>
        <ecNumber evidence="8">7.4.2.8</ecNumber>
    </recommendedName>
</protein>
<dbReference type="EC" id="7.4.2.8" evidence="8"/>
<dbReference type="EMBL" id="AJ430232">
    <property type="protein sequence ID" value="CAD22886.1"/>
    <property type="molecule type" value="Genomic_DNA"/>
</dbReference>
<dbReference type="SMR" id="Q8RK01"/>
<dbReference type="GO" id="GO:0005737">
    <property type="term" value="C:cytoplasm"/>
    <property type="evidence" value="ECO:0007669"/>
    <property type="project" value="UniProtKB-SubCell"/>
</dbReference>
<dbReference type="GO" id="GO:0030257">
    <property type="term" value="C:type III protein secretion system complex"/>
    <property type="evidence" value="ECO:0007669"/>
    <property type="project" value="InterPro"/>
</dbReference>
<dbReference type="GO" id="GO:0005524">
    <property type="term" value="F:ATP binding"/>
    <property type="evidence" value="ECO:0007669"/>
    <property type="project" value="UniProtKB-KW"/>
</dbReference>
<dbReference type="GO" id="GO:0016887">
    <property type="term" value="F:ATP hydrolysis activity"/>
    <property type="evidence" value="ECO:0007669"/>
    <property type="project" value="InterPro"/>
</dbReference>
<dbReference type="GO" id="GO:0008564">
    <property type="term" value="F:protein-exporting ATPase activity"/>
    <property type="evidence" value="ECO:0007669"/>
    <property type="project" value="UniProtKB-EC"/>
</dbReference>
<dbReference type="GO" id="GO:0046933">
    <property type="term" value="F:proton-transporting ATP synthase activity, rotational mechanism"/>
    <property type="evidence" value="ECO:0007669"/>
    <property type="project" value="TreeGrafter"/>
</dbReference>
<dbReference type="GO" id="GO:0030254">
    <property type="term" value="P:protein secretion by the type III secretion system"/>
    <property type="evidence" value="ECO:0007669"/>
    <property type="project" value="InterPro"/>
</dbReference>
<dbReference type="CDD" id="cd18117">
    <property type="entry name" value="ATP-synt_flagellum-secretory_path_III_N"/>
    <property type="match status" value="1"/>
</dbReference>
<dbReference type="CDD" id="cd01136">
    <property type="entry name" value="ATPase_flagellum-secretory_path_III"/>
    <property type="match status" value="1"/>
</dbReference>
<dbReference type="FunFam" id="3.40.50.12240:FF:000002">
    <property type="entry name" value="Flagellum-specific ATP synthase FliI"/>
    <property type="match status" value="1"/>
</dbReference>
<dbReference type="Gene3D" id="3.40.50.12240">
    <property type="match status" value="1"/>
</dbReference>
<dbReference type="InterPro" id="IPR003593">
    <property type="entry name" value="AAA+_ATPase"/>
</dbReference>
<dbReference type="InterPro" id="IPR020003">
    <property type="entry name" value="ATPase_a/bsu_AS"/>
</dbReference>
<dbReference type="InterPro" id="IPR050053">
    <property type="entry name" value="ATPase_alpha/beta_chains"/>
</dbReference>
<dbReference type="InterPro" id="IPR004100">
    <property type="entry name" value="ATPase_F1/V1/A1_a/bsu_N"/>
</dbReference>
<dbReference type="InterPro" id="IPR000194">
    <property type="entry name" value="ATPase_F1/V1/A1_a/bsu_nucl-bd"/>
</dbReference>
<dbReference type="InterPro" id="IPR005714">
    <property type="entry name" value="ATPase_T3SS_FliI/YscN"/>
</dbReference>
<dbReference type="InterPro" id="IPR027417">
    <property type="entry name" value="P-loop_NTPase"/>
</dbReference>
<dbReference type="InterPro" id="IPR040627">
    <property type="entry name" value="T3SS_ATPase_C"/>
</dbReference>
<dbReference type="NCBIfam" id="TIGR01026">
    <property type="entry name" value="fliI_yscN"/>
    <property type="match status" value="1"/>
</dbReference>
<dbReference type="PANTHER" id="PTHR15184">
    <property type="entry name" value="ATP SYNTHASE"/>
    <property type="match status" value="1"/>
</dbReference>
<dbReference type="PANTHER" id="PTHR15184:SF9">
    <property type="entry name" value="SPI-1 TYPE 3 SECRETION SYSTEM ATPASE"/>
    <property type="match status" value="1"/>
</dbReference>
<dbReference type="Pfam" id="PF00006">
    <property type="entry name" value="ATP-synt_ab"/>
    <property type="match status" value="1"/>
</dbReference>
<dbReference type="Pfam" id="PF02874">
    <property type="entry name" value="ATP-synt_ab_N"/>
    <property type="match status" value="1"/>
</dbReference>
<dbReference type="Pfam" id="PF18269">
    <property type="entry name" value="T3SS_ATPase_C"/>
    <property type="match status" value="1"/>
</dbReference>
<dbReference type="SMART" id="SM00382">
    <property type="entry name" value="AAA"/>
    <property type="match status" value="1"/>
</dbReference>
<dbReference type="SUPFAM" id="SSF52540">
    <property type="entry name" value="P-loop containing nucleoside triphosphate hydrolases"/>
    <property type="match status" value="1"/>
</dbReference>
<dbReference type="PROSITE" id="PS00152">
    <property type="entry name" value="ATPASE_ALPHA_BETA"/>
    <property type="match status" value="1"/>
</dbReference>
<sequence length="449" mass="48466">MNAALSQWKDAHAARLRDYSAVRVSGRVSAVRGILLECKIPAAKVGDLCEVSKADGSFLLAEIVGFTQECTLLSALGAPDGIQVGAPIRPLGIAHRIGVDDSLLGCVLDGFGRPLLGDCLGAFAGPDDRRETLPVIADALPPTQRPRITNALPTGVRAIDSAILLGEGQRVGLFAGAGCGKTTLMAELARNMGCDVIVFGLIGERGRELREFLDHELDETLRRRSVLVCATSDRSSMERARAAFTATAIAEAFRARGQKVLLLLDSLTRFARAQREIGIASGEPLGRGGLPPSVYTLLPRLVERAGMSENGSITALYTVLIEQDSMNDPVADEVRSLLDGHIVLSRKLAERGHYPAIDVSASISRILSNVTGREHQRANNRLRQLLAAYKQVEMLLRLGEYQAGADPVTDCAVQLNDDINEFLRQDLREPVPLQETLDGLLRLTSRLPE</sequence>
<comment type="function">
    <text evidence="1 2 4 8">ATPase component of the type III secretion system (T3SS), also called injectisome, which is used to inject bacterial effector proteins into eukaryotic host cells (PubMed:12734178). Acts as a molecular motor to provide the energy that is required for the export of proteins (Probable). Required for type III secretion apparatus (T3SA) formation, proper protein secretion, host cell invasion and virulence (By similarity). May play a critical role in T3SS substrate recognition, disassembly of the effector/chaperone complex and unfolding of the effector in an ATP-dependent manner prior to secretion (By similarity).</text>
</comment>
<comment type="catalytic activity">
    <reaction evidence="8">
        <text>ATP + H2O + cellular proteinSide 1 = ADP + phosphate + cellular proteinSide 2.</text>
        <dbReference type="EC" id="7.4.2.8"/>
    </reaction>
</comment>
<comment type="activity regulation">
    <text evidence="4">Oligomerization increases ATPase activity.</text>
</comment>
<comment type="biophysicochemical properties">
    <kinetics>
        <KM evidence="4">1.3 mM for ATP (dodecameric form)</KM>
        <KM evidence="4">0.114 mM for ATP (monomeric form)</KM>
        <Vmax evidence="4">43.0 mmol/min/mg enzyme for ATPase activity (dodecameric form)</Vmax>
        <Vmax evidence="4">0.0635 mmol/min/mg enzyme for ATPase activity (monomeric form)</Vmax>
    </kinetics>
</comment>
<comment type="subunit">
    <text evidence="3 4 5">The core secretion machinery of the T3SS is composed of approximately 20 different proteins, including cytoplasmic components, a base, an export apparatus and a needle (By similarity). This subunit is part of the cytosolic complex (PubMed:12734178). Forms homododecamers (PubMed:12734178, PubMed:16824099). Comprises two hexameric rings that are probably stacked face-to-face by the association of their C-terminal domains (PubMed:16824099). Also present as monomer and homohexamer in solution (PubMed:12734178).</text>
</comment>
<comment type="subcellular location">
    <subcellularLocation>
        <location evidence="4">Cytoplasm</location>
    </subcellularLocation>
    <text evidence="4">Associates with the inner membrane.</text>
</comment>
<comment type="similarity">
    <text evidence="7">Belongs to the ATPase alpha/beta chains family. T3SS ATPase subfamily.</text>
</comment>
<gene>
    <name evidence="3" type="primary">sctN</name>
    <name evidence="6" type="synonym">hrcN</name>
</gene>
<keyword id="KW-0067">ATP-binding</keyword>
<keyword id="KW-0963">Cytoplasm</keyword>
<keyword id="KW-0547">Nucleotide-binding</keyword>
<keyword id="KW-0653">Protein transport</keyword>
<keyword id="KW-1278">Translocase</keyword>
<keyword id="KW-0813">Transport</keyword>
<keyword id="KW-0843">Virulence</keyword>
<accession>Q8RK01</accession>
<reference key="1">
    <citation type="journal article" date="2003" name="J. Biol. Chem.">
        <title>Type III protein translocase: HrcN is a peripheral ATPase that is activated by oligomerization.</title>
        <authorList>
            <person name="Pozidis C."/>
            <person name="Chalkiadaki A."/>
            <person name="Gomez-Serrano A."/>
            <person name="Stahlberg H."/>
            <person name="Brown I."/>
            <person name="Tampakaki A.P."/>
            <person name="Lustig A."/>
            <person name="Sianidis G."/>
            <person name="Politou A.S."/>
            <person name="Engel A."/>
            <person name="Panopoulos N.J."/>
            <person name="Mansfield J."/>
            <person name="Pugsley A.P."/>
            <person name="Karamanou S."/>
            <person name="Economou A."/>
        </authorList>
    </citation>
    <scope>NUCLEOTIDE SEQUENCE [GENOMIC DNA]</scope>
    <scope>FUNCTION</scope>
    <scope>ATPASE ACTIVITY</scope>
    <scope>CATALYTIC ACTIVITY</scope>
    <scope>ACTIVITY REGULATION</scope>
    <scope>BIOPHYSICOCHEMICAL PROPERTIES</scope>
    <scope>SUBUNIT</scope>
    <scope>SUBCELLULAR LOCATION</scope>
</reference>
<reference key="2">
    <citation type="journal article" date="2006" name="Mol. Microbiol.">
        <title>Double hexameric ring assembly of the type III protein translocase ATPase HrcN.</title>
        <authorList>
            <person name="Mueller S.A."/>
            <person name="Pozidis C."/>
            <person name="Stone R."/>
            <person name="Meesters C."/>
            <person name="Chami M."/>
            <person name="Engel A."/>
            <person name="Economou A."/>
            <person name="Stahlberg H."/>
        </authorList>
    </citation>
    <scope>SUBUNIT</scope>
    <scope>CRYO-ELECTRON MICROSCOPY</scope>
</reference>
<feature type="chain" id="PRO_0000144701" description="Type 3 secretion system ATPase">
    <location>
        <begin position="1"/>
        <end position="449"/>
    </location>
</feature>
<feature type="binding site" evidence="2">
    <location>
        <begin position="178"/>
        <end position="183"/>
    </location>
    <ligand>
        <name>ATP</name>
        <dbReference type="ChEBI" id="CHEBI:30616"/>
    </ligand>
</feature>
<organism>
    <name type="scientific">Pseudomonas savastanoi pv. phaseolicola</name>
    <name type="common">Pseudomonas syringae pv. phaseolicola</name>
    <dbReference type="NCBI Taxonomy" id="319"/>
    <lineage>
        <taxon>Bacteria</taxon>
        <taxon>Pseudomonadati</taxon>
        <taxon>Pseudomonadota</taxon>
        <taxon>Gammaproteobacteria</taxon>
        <taxon>Pseudomonadales</taxon>
        <taxon>Pseudomonadaceae</taxon>
        <taxon>Pseudomonas</taxon>
    </lineage>
</organism>
<proteinExistence type="evidence at protein level"/>